<reference evidence="3" key="1">
    <citation type="journal article" date="1998" name="Science">
        <title>Genome sequence of the nematode C. elegans: a platform for investigating biology.</title>
        <authorList>
            <consortium name="The C. elegans sequencing consortium"/>
        </authorList>
    </citation>
    <scope>NUCLEOTIDE SEQUENCE [LARGE SCALE GENOMIC DNA]</scope>
    <source>
        <strain evidence="3">Bristol N2</strain>
    </source>
</reference>
<reference evidence="2" key="2">
    <citation type="journal article" date="2021" name="EMBO J.">
        <title>Intrinsically disordered protein PID-2 modulates Z granules and is required for heritable piRNA-induced silencing in the Caenorhabditis elegans embryo.</title>
        <authorList>
            <person name="Placentino M."/>
            <person name="de Jesus Domingues A.M."/>
            <person name="Schreier J."/>
            <person name="Dietz S."/>
            <person name="Hellmann S."/>
            <person name="de Albuquerque B.F."/>
            <person name="Butter F."/>
            <person name="Ketting R.F."/>
        </authorList>
    </citation>
    <scope>FUNCTION</scope>
    <scope>INTERACTION WITH PID-2; APP-1 AND PRMT-5</scope>
    <scope>SUBCELLULAR LOCATION</scope>
    <scope>DEVELOPMENTAL STAGE</scope>
</reference>
<sequence>MPTSADDSLPLEDSEECDAYIAKFLRPRTHLFSTVKQEKQRRESHDNKYETAVRSKAIMPSQASKVYRKEMFYSTSKCDSRFINNLHTFNTFDGGSGYSEASPHYAMDFVKNKGFADDEMAGHLKSLEVSRKMTENVKWLNDNRNDLKTALRRSNSCPEFPIDRDREKITTLRRNEKRNENAKISNFDASFVPELCCSDDYPSILCSIATAFKTVVSRVNAQSIGSGELKIAKVLCSTEDLFAYVIPKRFNTRDALFAFSNQFRAWLEYKPNVQLYTHYRFINVILYLEEFKHERTEFRRARHVCNLKSRRNHGLFLELDTGMLRVVEITPEKVRFLANSWAHNPSAIVEVRFDGVKNEKDISEEIQAIRNTGRATMISFDREHREHMNGKWPNPRTWSSLGTVVLRRECTHHKDHSKPPLTRLFCEDRDCIGLCSTGDYFKVPIPEEPNPSHDKLVELRARFASERTLGYTDRTPIAAYILPNTDAHQNELIPDFFSRVQFLNGYSGPSGLAIITLNEAMFWVDNGLLKSAESQVDDRSWTVKEYQSVEEVINWLAKILPPKSKVGFDPTLVSYTWHQQALQSMTSDRFELVAIPGNIVDEIWRMRPFQRGDVVKMLDKNTPEIPVHVKIDRLRKSLKPNKCLAAVITSLEDIMWLLNIRGNDLPYNPVTYSYLFITMSDVRLFIDAKRLNDVSKAYFARQSIDVDDYKAASPYIYDWISATKSSFADKKILISPETNYLIGRLIGEDHSMIDPSIMERIKKIKNTDQLKGMRASNLRDSIAIVEFLCKFEKERRDGYTFTEYELAADIEEVKTRNREYIGLKQPTIFSAGEHSSVHAHRPDAQKIVFHYQQFMFQTGSHYTDGATNCARTIWDSYPTEEFMNQYTLVLKGHIRLASASFPKTLTYGSRLDIFARIALWDAGLDYDHETGHSVGHFLNIRDTQIVIGREPYSSNSIIEAGQVMTIEPGYYSEGMYGIRIGNCYETVDVTLSQNDQYFLRFEPLTLIPIQTSIVNKDLLTSEEINWLNKYHFKVFSKIGYILRKENRMEEYDWLFNACQPI</sequence>
<protein>
    <recommendedName>
        <fullName evidence="2">Protein pid-5</fullName>
    </recommendedName>
    <alternativeName>
        <fullName evidence="4">piRNA-induced silencing defective protein 5</fullName>
    </alternativeName>
</protein>
<feature type="chain" id="PRO_0000452726" description="Protein pid-5">
    <location>
        <begin position="1"/>
        <end position="1061"/>
    </location>
</feature>
<feature type="splice variant" id="VSP_061046" description="In isoform d." evidence="2">
    <location>
        <begin position="1"/>
        <end position="376"/>
    </location>
</feature>
<feature type="splice variant" id="VSP_061047" description="In isoform c." evidence="2">
    <location>
        <begin position="1"/>
        <end position="58"/>
    </location>
</feature>
<keyword id="KW-0025">Alternative splicing</keyword>
<keyword id="KW-0963">Cytoplasm</keyword>
<keyword id="KW-1185">Reference proteome</keyword>
<keyword id="KW-0943">RNA-mediated gene silencing</keyword>
<gene>
    <name evidence="4" type="primary">pid-5</name>
    <name evidence="4" type="ORF">Y45G5AM.2</name>
</gene>
<proteinExistence type="evidence at protein level"/>
<dbReference type="EMBL" id="BX284605">
    <property type="protein sequence ID" value="CCD74321.1"/>
    <property type="molecule type" value="Genomic_DNA"/>
</dbReference>
<dbReference type="EMBL" id="BX284605">
    <property type="protein sequence ID" value="SAP35608.1"/>
    <property type="molecule type" value="Genomic_DNA"/>
</dbReference>
<dbReference type="EMBL" id="BX284605">
    <property type="protein sequence ID" value="SAP35609.1"/>
    <property type="molecule type" value="Genomic_DNA"/>
</dbReference>
<dbReference type="RefSeq" id="NP_001317846.1">
    <molecule id="Q9GUI6-2"/>
    <property type="nucleotide sequence ID" value="NM_001330835.3"/>
</dbReference>
<dbReference type="RefSeq" id="NP_001317847.1">
    <molecule id="Q9GUI6-3"/>
    <property type="nucleotide sequence ID" value="NM_001330836.3"/>
</dbReference>
<dbReference type="RefSeq" id="NP_504162.2">
    <molecule id="Q9GUI6-1"/>
    <property type="nucleotide sequence ID" value="NM_071761.5"/>
</dbReference>
<dbReference type="SMR" id="Q9GUI6"/>
<dbReference type="FunCoup" id="Q9GUI6">
    <property type="interactions" value="2751"/>
</dbReference>
<dbReference type="STRING" id="6239.Y45G5AM.2a.1"/>
<dbReference type="PaxDb" id="6239-Y45G5AM.2"/>
<dbReference type="PeptideAtlas" id="Q9GUI6"/>
<dbReference type="EnsemblMetazoa" id="Y45G5AM.2a.1">
    <molecule id="Q9GUI6-1"/>
    <property type="protein sequence ID" value="Y45G5AM.2a.1"/>
    <property type="gene ID" value="WBGene00021555"/>
</dbReference>
<dbReference type="EnsemblMetazoa" id="Y45G5AM.2c.1">
    <molecule id="Q9GUI6-2"/>
    <property type="protein sequence ID" value="Y45G5AM.2c.1"/>
    <property type="gene ID" value="WBGene00021555"/>
</dbReference>
<dbReference type="EnsemblMetazoa" id="Y45G5AM.2d.1">
    <molecule id="Q9GUI6-3"/>
    <property type="protein sequence ID" value="Y45G5AM.2d.1"/>
    <property type="gene ID" value="WBGene00021555"/>
</dbReference>
<dbReference type="GeneID" id="178819"/>
<dbReference type="KEGG" id="cel:CELE_Y45G5AM.2"/>
<dbReference type="UCSC" id="Y45G5AM.2">
    <molecule id="Q9GUI6-1"/>
    <property type="organism name" value="c. elegans"/>
</dbReference>
<dbReference type="AGR" id="WB:WBGene00021555"/>
<dbReference type="CTD" id="178819"/>
<dbReference type="WormBase" id="Y45G5AM.2a">
    <molecule id="Q9GUI6-1"/>
    <property type="protein sequence ID" value="CE31111"/>
    <property type="gene ID" value="WBGene00021555"/>
    <property type="gene designation" value="pid-5"/>
</dbReference>
<dbReference type="WormBase" id="Y45G5AM.2c">
    <molecule id="Q9GUI6-2"/>
    <property type="protein sequence ID" value="CE51642"/>
    <property type="gene ID" value="WBGene00021555"/>
    <property type="gene designation" value="pid-5"/>
</dbReference>
<dbReference type="WormBase" id="Y45G5AM.2d">
    <molecule id="Q9GUI6-3"/>
    <property type="protein sequence ID" value="CE51609"/>
    <property type="gene ID" value="WBGene00021555"/>
    <property type="gene designation" value="pid-5"/>
</dbReference>
<dbReference type="eggNOG" id="KOG2413">
    <property type="taxonomic scope" value="Eukaryota"/>
</dbReference>
<dbReference type="GeneTree" id="ENSGT00970000196568"/>
<dbReference type="HOGENOM" id="CLU_311745_0_0_1"/>
<dbReference type="InParanoid" id="Q9GUI6"/>
<dbReference type="OMA" id="IGNCYET"/>
<dbReference type="OrthoDB" id="9995434at2759"/>
<dbReference type="PhylomeDB" id="Q9GUI6"/>
<dbReference type="PRO" id="PR:Q9GUI6"/>
<dbReference type="Proteomes" id="UP000001940">
    <property type="component" value="Chromosome V"/>
</dbReference>
<dbReference type="Bgee" id="WBGene00021555">
    <property type="expression patterns" value="Expressed in germ line (C elegans) and 3 other cell types or tissues"/>
</dbReference>
<dbReference type="ExpressionAtlas" id="Q9GUI6">
    <property type="expression patterns" value="baseline and differential"/>
</dbReference>
<dbReference type="GO" id="GO:0000932">
    <property type="term" value="C:P-body"/>
    <property type="evidence" value="ECO:0007669"/>
    <property type="project" value="UniProtKB-SubCell"/>
</dbReference>
<dbReference type="GO" id="GO:0048471">
    <property type="term" value="C:perinuclear region of cytoplasm"/>
    <property type="evidence" value="ECO:0007669"/>
    <property type="project" value="UniProtKB-SubCell"/>
</dbReference>
<dbReference type="GO" id="GO:0070006">
    <property type="term" value="F:metalloaminopeptidase activity"/>
    <property type="evidence" value="ECO:0007669"/>
    <property type="project" value="InterPro"/>
</dbReference>
<dbReference type="GO" id="GO:0031047">
    <property type="term" value="P:regulatory ncRNA-mediated gene silencing"/>
    <property type="evidence" value="ECO:0007669"/>
    <property type="project" value="UniProtKB-KW"/>
</dbReference>
<dbReference type="CDD" id="cd01085">
    <property type="entry name" value="APP"/>
    <property type="match status" value="1"/>
</dbReference>
<dbReference type="FunFam" id="3.90.230.10:FF:000009">
    <property type="entry name" value="xaa-Pro aminopeptidase 2"/>
    <property type="match status" value="1"/>
</dbReference>
<dbReference type="FunFam" id="3.40.350.10:FF:000030">
    <property type="entry name" value="Xaa-Pro aminopeptidase app-1"/>
    <property type="match status" value="1"/>
</dbReference>
<dbReference type="Gene3D" id="3.90.230.10">
    <property type="entry name" value="Creatinase/methionine aminopeptidase superfamily"/>
    <property type="match status" value="1"/>
</dbReference>
<dbReference type="Gene3D" id="3.40.350.10">
    <property type="entry name" value="Creatinase/prolidase N-terminal domain"/>
    <property type="match status" value="2"/>
</dbReference>
<dbReference type="InterPro" id="IPR029149">
    <property type="entry name" value="Creatin/AminoP/Spt16_N"/>
</dbReference>
<dbReference type="InterPro" id="IPR036005">
    <property type="entry name" value="Creatinase/aminopeptidase-like"/>
</dbReference>
<dbReference type="InterPro" id="IPR000587">
    <property type="entry name" value="Creatinase_N"/>
</dbReference>
<dbReference type="InterPro" id="IPR000994">
    <property type="entry name" value="Pept_M24"/>
</dbReference>
<dbReference type="InterPro" id="IPR033740">
    <property type="entry name" value="Pept_M24B"/>
</dbReference>
<dbReference type="InterPro" id="IPR032416">
    <property type="entry name" value="Peptidase_M24_C"/>
</dbReference>
<dbReference type="InterPro" id="IPR050422">
    <property type="entry name" value="X-Pro_aminopeptidase_P"/>
</dbReference>
<dbReference type="PANTHER" id="PTHR43763:SF13">
    <property type="entry name" value="PROTEIN PID-5"/>
    <property type="match status" value="1"/>
</dbReference>
<dbReference type="PANTHER" id="PTHR43763">
    <property type="entry name" value="XAA-PRO AMINOPEPTIDASE 1"/>
    <property type="match status" value="1"/>
</dbReference>
<dbReference type="Pfam" id="PF01321">
    <property type="entry name" value="Creatinase_N"/>
    <property type="match status" value="1"/>
</dbReference>
<dbReference type="Pfam" id="PF16189">
    <property type="entry name" value="Creatinase_N_2"/>
    <property type="match status" value="1"/>
</dbReference>
<dbReference type="Pfam" id="PF00557">
    <property type="entry name" value="Peptidase_M24"/>
    <property type="match status" value="1"/>
</dbReference>
<dbReference type="Pfam" id="PF16188">
    <property type="entry name" value="Peptidase_M24_C"/>
    <property type="match status" value="1"/>
</dbReference>
<dbReference type="SUPFAM" id="SSF55920">
    <property type="entry name" value="Creatinase/aminopeptidase"/>
    <property type="match status" value="1"/>
</dbReference>
<comment type="function">
    <text evidence="1">Together with pid-4, it is involved in gene silencing mediated by a class of 21 nucleotide PIWI-interacting RNAs (piRNAs) that possess a uracil residue at the 5'-end (also called 21U-RNAs) and guide the Piwi protein prg-1 to its DNA targets for silencing (PubMed:33231880). Together with pid-4, it is required for the biogenesis of secondary and tertiary 22G-siRNAs (PubMed:33231880). Specifically, promotes the production of 22G-siRNAs from the 5' end of target mRNAs (PubMed:33231880). Together with pid-4, plays a role in small RNA-directed transgenerational epigenetic inheritance (also called RNAe) over several generations and germline immortality (PubMed:33231880). Together with pid-4, plays a role in the formation of liquid-like condensates in the cytoplasm called Z granules (PubMed:33231880).</text>
</comment>
<comment type="subunit">
    <text evidence="1">May interact with pid-2, app-1 and prmt-5.</text>
</comment>
<comment type="subcellular location">
    <subcellularLocation>
        <location evidence="1">Cytoplasm</location>
        <location evidence="1">Perinuclear region</location>
    </subcellularLocation>
    <subcellularLocation>
        <location evidence="1">Cytoplasm</location>
        <location evidence="1">P-body</location>
    </subcellularLocation>
    <text evidence="1">Co-localizes with pid-4 at P granules in germ cells.</text>
</comment>
<comment type="alternative products">
    <event type="alternative splicing"/>
    <isoform>
        <id>Q9GUI6-1</id>
        <name evidence="4">a</name>
        <sequence type="displayed"/>
    </isoform>
    <isoform>
        <id>Q9GUI6-2</id>
        <name evidence="5">c</name>
        <sequence type="described" ref="VSP_061047"/>
    </isoform>
    <isoform>
        <id>Q9GUI6-3</id>
        <name evidence="6">d</name>
        <sequence type="described" ref="VSP_061046"/>
    </isoform>
</comment>
<comment type="developmental stage">
    <text evidence="1">Expressed in germ cells of L4 larvae (PubMed:33231880). Expressed at low levels in the pachytene stage of the meiotic region of L4 larvae (PubMed:33231880).</text>
</comment>
<comment type="similarity">
    <text evidence="2">Belongs to the peptidase M24B family.</text>
</comment>
<accession>Q9GUI6</accession>
<accession>A0A163VU95</accession>
<accession>A0A168HAZ2</accession>
<organism evidence="3">
    <name type="scientific">Caenorhabditis elegans</name>
    <dbReference type="NCBI Taxonomy" id="6239"/>
    <lineage>
        <taxon>Eukaryota</taxon>
        <taxon>Metazoa</taxon>
        <taxon>Ecdysozoa</taxon>
        <taxon>Nematoda</taxon>
        <taxon>Chromadorea</taxon>
        <taxon>Rhabditida</taxon>
        <taxon>Rhabditina</taxon>
        <taxon>Rhabditomorpha</taxon>
        <taxon>Rhabditoidea</taxon>
        <taxon>Rhabditidae</taxon>
        <taxon>Peloderinae</taxon>
        <taxon>Caenorhabditis</taxon>
    </lineage>
</organism>
<name>PID5_CAEEL</name>
<evidence type="ECO:0000269" key="1">
    <source>
    </source>
</evidence>
<evidence type="ECO:0000305" key="2"/>
<evidence type="ECO:0000312" key="3">
    <source>
        <dbReference type="Proteomes" id="UP000001940"/>
    </source>
</evidence>
<evidence type="ECO:0000312" key="4">
    <source>
        <dbReference type="WormBase" id="Y45G5AM.2a"/>
    </source>
</evidence>
<evidence type="ECO:0000312" key="5">
    <source>
        <dbReference type="WormBase" id="Y45G5AM.2c"/>
    </source>
</evidence>
<evidence type="ECO:0000312" key="6">
    <source>
        <dbReference type="WormBase" id="Y45G5AM.2d"/>
    </source>
</evidence>